<reference key="1">
    <citation type="journal article" date="2007" name="J. Bacteriol.">
        <title>The genome sequence of avian pathogenic Escherichia coli strain O1:K1:H7 shares strong similarities with human extraintestinal pathogenic E. coli genomes.</title>
        <authorList>
            <person name="Johnson T.J."/>
            <person name="Kariyawasam S."/>
            <person name="Wannemuehler Y."/>
            <person name="Mangiamele P."/>
            <person name="Johnson S.J."/>
            <person name="Doetkott C."/>
            <person name="Skyberg J.A."/>
            <person name="Lynne A.M."/>
            <person name="Johnson J.R."/>
            <person name="Nolan L.K."/>
        </authorList>
    </citation>
    <scope>NUCLEOTIDE SEQUENCE [LARGE SCALE GENOMIC DNA]</scope>
</reference>
<evidence type="ECO:0000255" key="1">
    <source>
        <dbReference type="HAMAP-Rule" id="MF_00821"/>
    </source>
</evidence>
<evidence type="ECO:0000305" key="2"/>
<feature type="chain" id="PRO_0000318225" description="Protein-export protein SecB">
    <location>
        <begin position="1"/>
        <end position="155"/>
    </location>
</feature>
<dbReference type="EMBL" id="CP000468">
    <property type="protein sequence ID" value="ABJ03086.1"/>
    <property type="status" value="ALT_INIT"/>
    <property type="molecule type" value="Genomic_DNA"/>
</dbReference>
<dbReference type="RefSeq" id="WP_000003382.1">
    <property type="nucleotide sequence ID" value="NZ_CADILS010000015.1"/>
</dbReference>
<dbReference type="SMR" id="A1AHE6"/>
<dbReference type="GeneID" id="89518465"/>
<dbReference type="KEGG" id="ecv:APECO1_2846"/>
<dbReference type="HOGENOM" id="CLU_111574_1_0_6"/>
<dbReference type="Proteomes" id="UP000008216">
    <property type="component" value="Chromosome"/>
</dbReference>
<dbReference type="GO" id="GO:0005737">
    <property type="term" value="C:cytoplasm"/>
    <property type="evidence" value="ECO:0007669"/>
    <property type="project" value="UniProtKB-SubCell"/>
</dbReference>
<dbReference type="GO" id="GO:0051082">
    <property type="term" value="F:unfolded protein binding"/>
    <property type="evidence" value="ECO:0007669"/>
    <property type="project" value="InterPro"/>
</dbReference>
<dbReference type="GO" id="GO:0006457">
    <property type="term" value="P:protein folding"/>
    <property type="evidence" value="ECO:0007669"/>
    <property type="project" value="UniProtKB-UniRule"/>
</dbReference>
<dbReference type="GO" id="GO:0051262">
    <property type="term" value="P:protein tetramerization"/>
    <property type="evidence" value="ECO:0007669"/>
    <property type="project" value="InterPro"/>
</dbReference>
<dbReference type="GO" id="GO:0015031">
    <property type="term" value="P:protein transport"/>
    <property type="evidence" value="ECO:0007669"/>
    <property type="project" value="UniProtKB-UniRule"/>
</dbReference>
<dbReference type="CDD" id="cd00557">
    <property type="entry name" value="Translocase_SecB"/>
    <property type="match status" value="1"/>
</dbReference>
<dbReference type="FunFam" id="3.10.420.10:FF:000001">
    <property type="entry name" value="Protein-export chaperone SecB"/>
    <property type="match status" value="1"/>
</dbReference>
<dbReference type="Gene3D" id="3.10.420.10">
    <property type="entry name" value="SecB-like"/>
    <property type="match status" value="1"/>
</dbReference>
<dbReference type="HAMAP" id="MF_00821">
    <property type="entry name" value="SecB"/>
    <property type="match status" value="1"/>
</dbReference>
<dbReference type="InterPro" id="IPR003708">
    <property type="entry name" value="SecB"/>
</dbReference>
<dbReference type="InterPro" id="IPR035958">
    <property type="entry name" value="SecB-like_sf"/>
</dbReference>
<dbReference type="NCBIfam" id="NF004390">
    <property type="entry name" value="PRK05751.1-1"/>
    <property type="match status" value="1"/>
</dbReference>
<dbReference type="NCBIfam" id="NF004393">
    <property type="entry name" value="PRK05751.1-4"/>
    <property type="match status" value="1"/>
</dbReference>
<dbReference type="NCBIfam" id="TIGR00809">
    <property type="entry name" value="secB"/>
    <property type="match status" value="1"/>
</dbReference>
<dbReference type="PANTHER" id="PTHR36918">
    <property type="match status" value="1"/>
</dbReference>
<dbReference type="PANTHER" id="PTHR36918:SF1">
    <property type="entry name" value="PROTEIN-EXPORT PROTEIN SECB"/>
    <property type="match status" value="1"/>
</dbReference>
<dbReference type="Pfam" id="PF02556">
    <property type="entry name" value="SecB"/>
    <property type="match status" value="1"/>
</dbReference>
<dbReference type="PRINTS" id="PR01594">
    <property type="entry name" value="SECBCHAPRONE"/>
</dbReference>
<dbReference type="SUPFAM" id="SSF54611">
    <property type="entry name" value="SecB-like"/>
    <property type="match status" value="1"/>
</dbReference>
<accession>A1AHE6</accession>
<gene>
    <name evidence="1" type="primary">secB</name>
    <name type="ordered locus">Ecok1_35920</name>
    <name type="ORF">APECO1_2846</name>
</gene>
<comment type="function">
    <text evidence="1">One of the proteins required for the normal export of preproteins out of the cell cytoplasm. It is a molecular chaperone that binds to a subset of precursor proteins, maintaining them in a translocation-competent state. It also specifically binds to its receptor SecA.</text>
</comment>
<comment type="subunit">
    <text evidence="1">Homotetramer, a dimer of dimers. One homotetramer interacts with 1 SecA dimer.</text>
</comment>
<comment type="subcellular location">
    <subcellularLocation>
        <location evidence="1">Cytoplasm</location>
    </subcellularLocation>
</comment>
<comment type="similarity">
    <text evidence="1">Belongs to the SecB family.</text>
</comment>
<comment type="sequence caution" evidence="2">
    <conflict type="erroneous initiation">
        <sequence resource="EMBL-CDS" id="ABJ03086"/>
    </conflict>
</comment>
<keyword id="KW-0143">Chaperone</keyword>
<keyword id="KW-0963">Cytoplasm</keyword>
<keyword id="KW-0653">Protein transport</keyword>
<keyword id="KW-1185">Reference proteome</keyword>
<keyword id="KW-0811">Translocation</keyword>
<keyword id="KW-0813">Transport</keyword>
<protein>
    <recommendedName>
        <fullName evidence="1">Protein-export protein SecB</fullName>
    </recommendedName>
</protein>
<name>SECB_ECOK1</name>
<sequence length="155" mass="17291">MSEQNNTEMTFQIQRIYTKDISFEAPNAPHVFQKDWQPEVKLDLDTASTQLADDVYEVVLRVTVTASLGEETAFLCEVQQGGIFSIAGIEGTQMAHCLGAYCPNILFPYARECITSMVSRGTFPQLNLAPVNFDALFMNYLQQQAGEGTEEHQDA</sequence>
<proteinExistence type="inferred from homology"/>
<organism>
    <name type="scientific">Escherichia coli O1:K1 / APEC</name>
    <dbReference type="NCBI Taxonomy" id="405955"/>
    <lineage>
        <taxon>Bacteria</taxon>
        <taxon>Pseudomonadati</taxon>
        <taxon>Pseudomonadota</taxon>
        <taxon>Gammaproteobacteria</taxon>
        <taxon>Enterobacterales</taxon>
        <taxon>Enterobacteriaceae</taxon>
        <taxon>Escherichia</taxon>
    </lineage>
</organism>